<comment type="function">
    <text evidence="1">One of the primary rRNA binding proteins, it binds directly near the 3'-end of the 23S rRNA, where it nucleates assembly of the 50S subunit.</text>
</comment>
<comment type="subunit">
    <text evidence="1">Part of the 50S ribosomal subunit. Forms a cluster with proteins L14 and L19.</text>
</comment>
<comment type="PTM">
    <text evidence="1">Methylated by PrmB.</text>
</comment>
<comment type="similarity">
    <text evidence="1">Belongs to the universal ribosomal protein uL3 family.</text>
</comment>
<dbReference type="EMBL" id="CP000388">
    <property type="protein sequence ID" value="ABG38999.1"/>
    <property type="molecule type" value="Genomic_DNA"/>
</dbReference>
<dbReference type="RefSeq" id="WP_011573391.1">
    <property type="nucleotide sequence ID" value="NC_008228.1"/>
</dbReference>
<dbReference type="SMR" id="Q15YN9"/>
<dbReference type="STRING" id="342610.Patl_0469"/>
<dbReference type="KEGG" id="pat:Patl_0469"/>
<dbReference type="eggNOG" id="COG0087">
    <property type="taxonomic scope" value="Bacteria"/>
</dbReference>
<dbReference type="HOGENOM" id="CLU_044142_4_1_6"/>
<dbReference type="OrthoDB" id="9806135at2"/>
<dbReference type="Proteomes" id="UP000001981">
    <property type="component" value="Chromosome"/>
</dbReference>
<dbReference type="GO" id="GO:0022625">
    <property type="term" value="C:cytosolic large ribosomal subunit"/>
    <property type="evidence" value="ECO:0007669"/>
    <property type="project" value="TreeGrafter"/>
</dbReference>
<dbReference type="GO" id="GO:0019843">
    <property type="term" value="F:rRNA binding"/>
    <property type="evidence" value="ECO:0007669"/>
    <property type="project" value="UniProtKB-UniRule"/>
</dbReference>
<dbReference type="GO" id="GO:0003735">
    <property type="term" value="F:structural constituent of ribosome"/>
    <property type="evidence" value="ECO:0007669"/>
    <property type="project" value="InterPro"/>
</dbReference>
<dbReference type="GO" id="GO:0006412">
    <property type="term" value="P:translation"/>
    <property type="evidence" value="ECO:0007669"/>
    <property type="project" value="UniProtKB-UniRule"/>
</dbReference>
<dbReference type="FunFam" id="2.40.30.10:FF:000004">
    <property type="entry name" value="50S ribosomal protein L3"/>
    <property type="match status" value="1"/>
</dbReference>
<dbReference type="FunFam" id="3.30.160.810:FF:000001">
    <property type="entry name" value="50S ribosomal protein L3"/>
    <property type="match status" value="1"/>
</dbReference>
<dbReference type="Gene3D" id="3.30.160.810">
    <property type="match status" value="1"/>
</dbReference>
<dbReference type="Gene3D" id="2.40.30.10">
    <property type="entry name" value="Translation factors"/>
    <property type="match status" value="1"/>
</dbReference>
<dbReference type="HAMAP" id="MF_01325_B">
    <property type="entry name" value="Ribosomal_uL3_B"/>
    <property type="match status" value="1"/>
</dbReference>
<dbReference type="InterPro" id="IPR000597">
    <property type="entry name" value="Ribosomal_uL3"/>
</dbReference>
<dbReference type="InterPro" id="IPR019927">
    <property type="entry name" value="Ribosomal_uL3_bac/org-type"/>
</dbReference>
<dbReference type="InterPro" id="IPR019926">
    <property type="entry name" value="Ribosomal_uL3_CS"/>
</dbReference>
<dbReference type="InterPro" id="IPR009000">
    <property type="entry name" value="Transl_B-barrel_sf"/>
</dbReference>
<dbReference type="NCBIfam" id="TIGR03625">
    <property type="entry name" value="L3_bact"/>
    <property type="match status" value="1"/>
</dbReference>
<dbReference type="PANTHER" id="PTHR11229">
    <property type="entry name" value="50S RIBOSOMAL PROTEIN L3"/>
    <property type="match status" value="1"/>
</dbReference>
<dbReference type="PANTHER" id="PTHR11229:SF16">
    <property type="entry name" value="LARGE RIBOSOMAL SUBUNIT PROTEIN UL3C"/>
    <property type="match status" value="1"/>
</dbReference>
<dbReference type="Pfam" id="PF00297">
    <property type="entry name" value="Ribosomal_L3"/>
    <property type="match status" value="1"/>
</dbReference>
<dbReference type="SUPFAM" id="SSF50447">
    <property type="entry name" value="Translation proteins"/>
    <property type="match status" value="1"/>
</dbReference>
<dbReference type="PROSITE" id="PS00474">
    <property type="entry name" value="RIBOSOMAL_L3"/>
    <property type="match status" value="1"/>
</dbReference>
<gene>
    <name evidence="1" type="primary">rplC</name>
    <name type="ordered locus">Patl_0469</name>
</gene>
<sequence length="212" mass="22435">MAIGLIGRKVGMTRIFTEDGVSIPVTVIEATPNRVTQLRTDETDGYTALQVTAGDKKANRVNKAAAGHFAKAGVEAGRGLWEFRLDGNEGEGIEVGSEITVEIFAETKMVDVAGTSKGKGFQGAIKRWNFSHQRNSHGNSLSHRAPGSIGQNQSPGKVFKGKKMAGQMGNKRVTVQSLDVVRVDAENNLLLVRGNVPGAPGGDVIIKAAVKA</sequence>
<name>RL3_PSEA6</name>
<accession>Q15YN9</accession>
<feature type="chain" id="PRO_1000052111" description="Large ribosomal subunit protein uL3">
    <location>
        <begin position="1"/>
        <end position="212"/>
    </location>
</feature>
<feature type="region of interest" description="Disordered" evidence="2">
    <location>
        <begin position="134"/>
        <end position="155"/>
    </location>
</feature>
<feature type="modified residue" description="N5-methylglutamine" evidence="1">
    <location>
        <position position="153"/>
    </location>
</feature>
<keyword id="KW-0488">Methylation</keyword>
<keyword id="KW-0687">Ribonucleoprotein</keyword>
<keyword id="KW-0689">Ribosomal protein</keyword>
<keyword id="KW-0694">RNA-binding</keyword>
<keyword id="KW-0699">rRNA-binding</keyword>
<protein>
    <recommendedName>
        <fullName evidence="1">Large ribosomal subunit protein uL3</fullName>
    </recommendedName>
    <alternativeName>
        <fullName evidence="3">50S ribosomal protein L3</fullName>
    </alternativeName>
</protein>
<reference key="1">
    <citation type="submission" date="2006-06" db="EMBL/GenBank/DDBJ databases">
        <title>Complete sequence of Pseudoalteromonas atlantica T6c.</title>
        <authorList>
            <consortium name="US DOE Joint Genome Institute"/>
            <person name="Copeland A."/>
            <person name="Lucas S."/>
            <person name="Lapidus A."/>
            <person name="Barry K."/>
            <person name="Detter J.C."/>
            <person name="Glavina del Rio T."/>
            <person name="Hammon N."/>
            <person name="Israni S."/>
            <person name="Dalin E."/>
            <person name="Tice H."/>
            <person name="Pitluck S."/>
            <person name="Saunders E."/>
            <person name="Brettin T."/>
            <person name="Bruce D."/>
            <person name="Han C."/>
            <person name="Tapia R."/>
            <person name="Gilna P."/>
            <person name="Schmutz J."/>
            <person name="Larimer F."/>
            <person name="Land M."/>
            <person name="Hauser L."/>
            <person name="Kyrpides N."/>
            <person name="Kim E."/>
            <person name="Karls A.C."/>
            <person name="Bartlett D."/>
            <person name="Higgins B.P."/>
            <person name="Richardson P."/>
        </authorList>
    </citation>
    <scope>NUCLEOTIDE SEQUENCE [LARGE SCALE GENOMIC DNA]</scope>
    <source>
        <strain>T6c / ATCC BAA-1087</strain>
    </source>
</reference>
<organism>
    <name type="scientific">Pseudoalteromonas atlantica (strain T6c / ATCC BAA-1087)</name>
    <dbReference type="NCBI Taxonomy" id="3042615"/>
    <lineage>
        <taxon>Bacteria</taxon>
        <taxon>Pseudomonadati</taxon>
        <taxon>Pseudomonadota</taxon>
        <taxon>Gammaproteobacteria</taxon>
        <taxon>Alteromonadales</taxon>
        <taxon>Alteromonadaceae</taxon>
        <taxon>Paraglaciecola</taxon>
    </lineage>
</organism>
<evidence type="ECO:0000255" key="1">
    <source>
        <dbReference type="HAMAP-Rule" id="MF_01325"/>
    </source>
</evidence>
<evidence type="ECO:0000256" key="2">
    <source>
        <dbReference type="SAM" id="MobiDB-lite"/>
    </source>
</evidence>
<evidence type="ECO:0000305" key="3"/>
<proteinExistence type="inferred from homology"/>